<keyword id="KW-0044">Antibiotic</keyword>
<keyword id="KW-0929">Antimicrobial</keyword>
<keyword id="KW-0165">Cleavage on pair of basic residues</keyword>
<keyword id="KW-0472">Membrane</keyword>
<keyword id="KW-0964">Secreted</keyword>
<keyword id="KW-0732">Signal</keyword>
<keyword id="KW-1052">Target cell membrane</keyword>
<keyword id="KW-1053">Target membrane</keyword>
<keyword id="KW-0800">Toxin</keyword>
<evidence type="ECO:0000255" key="1"/>
<evidence type="ECO:0000269" key="2">
    <source>
    </source>
</evidence>
<evidence type="ECO:0000269" key="3">
    <source ref="1"/>
</evidence>
<evidence type="ECO:0000269" key="4">
    <source ref="2"/>
</evidence>
<evidence type="ECO:0000303" key="5">
    <source>
    </source>
</evidence>
<evidence type="ECO:0000303" key="6">
    <source ref="1"/>
</evidence>
<evidence type="ECO:0000305" key="7"/>
<evidence type="ECO:0000305" key="8">
    <source ref="1"/>
</evidence>
<dbReference type="EMBL" id="HF545613">
    <property type="protein sequence ID" value="CCN80315.1"/>
    <property type="molecule type" value="mRNA"/>
</dbReference>
<dbReference type="SMR" id="N0EAL3"/>
<dbReference type="GO" id="GO:0005576">
    <property type="term" value="C:extracellular region"/>
    <property type="evidence" value="ECO:0007669"/>
    <property type="project" value="UniProtKB-SubCell"/>
</dbReference>
<dbReference type="GO" id="GO:0016020">
    <property type="term" value="C:membrane"/>
    <property type="evidence" value="ECO:0007669"/>
    <property type="project" value="UniProtKB-KW"/>
</dbReference>
<dbReference type="GO" id="GO:0044218">
    <property type="term" value="C:other organism cell membrane"/>
    <property type="evidence" value="ECO:0007669"/>
    <property type="project" value="UniProtKB-KW"/>
</dbReference>
<dbReference type="GO" id="GO:0090729">
    <property type="term" value="F:toxin activity"/>
    <property type="evidence" value="ECO:0007669"/>
    <property type="project" value="UniProtKB-KW"/>
</dbReference>
<dbReference type="GO" id="GO:0042742">
    <property type="term" value="P:defense response to bacterium"/>
    <property type="evidence" value="ECO:0007669"/>
    <property type="project" value="UniProtKB-KW"/>
</dbReference>
<reference key="1">
    <citation type="journal article" date="2013" name="Int. J. Pept. Res. Ther.">
        <title>Mauriporin, a novel cationic alpha-helical peptide with selective cytotoxic activity against prostate cancer cell lines from the venom of the scorpion Androctonus mauritanicus.</title>
        <authorList>
            <person name="Almaaytah A."/>
            <person name="Tarazi S."/>
            <person name="Mhaidat N."/>
            <person name="Al Balas Q."/>
            <person name="Mukattash T.L."/>
        </authorList>
    </citation>
    <scope>NUCLEOTIDE SEQUENCE [MRNA]</scope>
    <scope>SYNTHESIS OF 23-70</scope>
    <scope>FUNCTION</scope>
    <scope>MASS SPECTROMETRY</scope>
    <scope>SUBCELLULAR LOCATION</scope>
    <scope>CIRCULAR DICHROISM</scope>
    <source>
        <tissue>Venom</tissue>
        <tissue>Venom gland</tissue>
    </source>
</reference>
<reference key="2">
    <citation type="journal article" date="2014" name="Int. J. Pept. Res. Ther.">
        <title>Antimicrobial and antibiofilm activity of mauriporin, a multifunctional scorpion venom peptide.</title>
        <authorList>
            <person name="Almaaytah A."/>
            <person name="Tarazi S."/>
            <person name="Alsheyab F."/>
            <person name="Al-Balas Q."/>
            <person name="Mukattash T."/>
        </authorList>
    </citation>
    <scope>FUNCTION</scope>
    <scope>3D-STRUCTURE MODELING</scope>
</reference>
<reference key="3">
    <citation type="journal article" date="2016" name="Biochim. Biophys. Acta">
        <title>From a pro-apoptotic peptide to a lytic peptide: one single residue mutation.</title>
        <authorList>
            <person name="Zhou X.R."/>
            <person name="Zhang Q."/>
            <person name="Tian X.B."/>
            <person name="Cao Y.M."/>
            <person name="Liu Z.Q."/>
            <person name="Fan R."/>
            <person name="Ding X.F."/>
            <person name="Zhu Z."/>
            <person name="Chen L."/>
            <person name="Luo S.Z."/>
        </authorList>
    </citation>
    <scope>FUNCTION OF ANTICANCER PEPTIDE ANALOG ZXR-1 AND ZXR-2</scope>
    <scope>SYNTHESIS OF 23-38</scope>
</reference>
<reference key="4">
    <citation type="journal article" date="2014" name="Peptides">
        <title>Scorpion venom peptides with no disulfide bridges: a review.</title>
        <authorList>
            <person name="Almaaytah A."/>
            <person name="Albalas Q."/>
        </authorList>
    </citation>
    <scope>NOMENCLATURE</scope>
</reference>
<accession>N0EAL3</accession>
<organism>
    <name type="scientific">Androctonus mauritanicus</name>
    <name type="common">Fat-tailed scorpion</name>
    <dbReference type="NCBI Taxonomy" id="6859"/>
    <lineage>
        <taxon>Eukaryota</taxon>
        <taxon>Metazoa</taxon>
        <taxon>Ecdysozoa</taxon>
        <taxon>Arthropoda</taxon>
        <taxon>Chelicerata</taxon>
        <taxon>Arachnida</taxon>
        <taxon>Scorpiones</taxon>
        <taxon>Buthida</taxon>
        <taxon>Buthoidea</taxon>
        <taxon>Buthidae</taxon>
        <taxon>Androctonus</taxon>
    </lineage>
</organism>
<name>NDB28_ANDMU</name>
<proteinExistence type="evidence at protein level"/>
<feature type="signal peptide" evidence="1">
    <location>
        <begin position="1"/>
        <end position="22"/>
    </location>
</feature>
<feature type="chain" id="PRO_0000432337" description="Mauriporin">
    <location>
        <begin position="23"/>
        <end position="70"/>
    </location>
</feature>
<sequence length="73" mass="8417">MNKKTLLVIFFITMLIVDEVNSFKIGGFIKKLWRSKLAKKLRAKGRELLKDYANRVINGGPEEEAAVPAERRR</sequence>
<protein>
    <recommendedName>
        <fullName evidence="6">Mauriporin</fullName>
    </recommendedName>
    <alternativeName>
        <fullName evidence="5">Non-disulfide-bridged peptide 2.8</fullName>
        <shortName evidence="5">NDBP-2.8</shortName>
    </alternativeName>
</protein>
<comment type="function">
    <text evidence="3 4">Amphipathic peptide that displays potent antimicrobial activities against a range of Gram-positive and Gram-negative planktonic bacteria with MIC values in the range 5 uM to 10 uM (Ref.2). In more details, it is active on Listeria ivanovii (MIC=5 uM), Staphylococcus epidermidis (MIC=10 uM), Salmonella enterica (MIC=5 uM), Pseudomonas aeruginosa (ATCC 27853) (MIC=5 uM), Acinetobacter baumannii (MIC=5 uM), Klebsiella pneumoniae (MIC=5 uM), Escherichia coli (MIC=7.5 uM), Salmonella typhimurium (MIC=7.5 uM), Pseudomonas aeruginosa (ATCC 9027) (MIC=10 uM) (Ref.2). Is also able to prevent P.aeruginosa biofilm formation while showing weak hemolytic activity towards human erythrocytes (Ref.2). Probably induces bacterial cell death through membrane permeabilization (Ref.2). Moreover, shows DNA-binding activities (Ref.2). Also exerts potent selective cytotoxic and antiproliferative activity against three different prostate cancer cell lines (IC(50)=4.4-7.8 uM), compared to non-tumorigenic cell lines (IC(50)=59.7 uM in Vero and 62.5 uM in HUVEC cells) (Ref.1). This peptide possibly exerts its cytotoxic activity through a necrotic mode of cell death (Ref.1). Only shows diminished hemolytic activity against sheep erythrocytes (Ref.1). Does not induce cell death through apoptosis and consequently is not acting upon an intracellular target (Ref.1).</text>
</comment>
<comment type="subcellular location">
    <subcellularLocation>
        <location evidence="3">Secreted</location>
    </subcellularLocation>
    <subcellularLocation>
        <location evidence="8">Target cell membrane</location>
    </subcellularLocation>
    <text evidence="8">Forms a helical membrane channel in the prey.</text>
</comment>
<comment type="tissue specificity">
    <text evidence="7">Expressed by the venom gland.</text>
</comment>
<comment type="mass spectrometry" mass="5398.1" method="MALDI" evidence="3"/>
<comment type="miscellaneous">
    <text evidence="2">ZXR-1 and ZXR-2 are two shortened peptides derived from mauriporin. ZXR-1 sequence consists of the 16 N-terminal residues (FKIGGFIKKLWRSKLA), while ZXR-2 has the additional residue difference K36L (FKIGGFIKKLWRSLLA) (PubMed:27207743). Both peptides display distinct anticancer modes of action (PubMed:27207743). ZXR-1 could translocate into cells, target on the mitochondria and induce cell apoptosis, while ZXR-2 directly targets on the cell membranes and causes membrane lysis (PubMed:27207743). The variance in their acting mechanisms might be due to the different amphipathicity and positive charge distribution (PubMed:27207743).</text>
</comment>
<comment type="similarity">
    <text evidence="7">Belongs to the non-disulfide-bridged peptide (NDBP) superfamily. Long chain multifunctional peptide (group 2) family.</text>
</comment>